<gene>
    <name evidence="1" type="primary">panD</name>
    <name type="ordered locus">BB3211</name>
</gene>
<comment type="function">
    <text evidence="1">Catalyzes the pyruvoyl-dependent decarboxylation of aspartate to produce beta-alanine.</text>
</comment>
<comment type="catalytic activity">
    <reaction evidence="1">
        <text>L-aspartate + H(+) = beta-alanine + CO2</text>
        <dbReference type="Rhea" id="RHEA:19497"/>
        <dbReference type="ChEBI" id="CHEBI:15378"/>
        <dbReference type="ChEBI" id="CHEBI:16526"/>
        <dbReference type="ChEBI" id="CHEBI:29991"/>
        <dbReference type="ChEBI" id="CHEBI:57966"/>
        <dbReference type="EC" id="4.1.1.11"/>
    </reaction>
</comment>
<comment type="cofactor">
    <cofactor evidence="1">
        <name>pyruvate</name>
        <dbReference type="ChEBI" id="CHEBI:15361"/>
    </cofactor>
    <text evidence="1">Binds 1 pyruvoyl group covalently per subunit.</text>
</comment>
<comment type="pathway">
    <text evidence="1">Cofactor biosynthesis; (R)-pantothenate biosynthesis; beta-alanine from L-aspartate: step 1/1.</text>
</comment>
<comment type="subunit">
    <text evidence="1">Heterooctamer of four alpha and four beta subunits.</text>
</comment>
<comment type="subcellular location">
    <subcellularLocation>
        <location evidence="1">Cytoplasm</location>
    </subcellularLocation>
</comment>
<comment type="PTM">
    <text evidence="1">Is synthesized initially as an inactive proenzyme, which is activated by self-cleavage at a specific serine bond to produce a beta-subunit with a hydroxyl group at its C-terminus and an alpha-subunit with a pyruvoyl group at its N-terminus.</text>
</comment>
<comment type="similarity">
    <text evidence="1">Belongs to the PanD family.</text>
</comment>
<sequence length="122" mass="13579">MQRIMLRAKLHRVTVTEADLHYEGSCGIDEDLLDAAGMREFERIELYNVTNGERFDTYIIKAARGSGAISLNGAAARRAQVGDLLIICTYGPMSEEQSATHKPQVVLVDDANRVKEIRKFPA</sequence>
<dbReference type="EC" id="4.1.1.11" evidence="1"/>
<dbReference type="EMBL" id="BX640446">
    <property type="protein sequence ID" value="CAE33703.1"/>
    <property type="molecule type" value="Genomic_DNA"/>
</dbReference>
<dbReference type="RefSeq" id="WP_003810617.1">
    <property type="nucleotide sequence ID" value="NC_002927.3"/>
</dbReference>
<dbReference type="SMR" id="Q7WHJ6"/>
<dbReference type="GeneID" id="93203668"/>
<dbReference type="KEGG" id="bbr:BB3211"/>
<dbReference type="eggNOG" id="COG0853">
    <property type="taxonomic scope" value="Bacteria"/>
</dbReference>
<dbReference type="HOGENOM" id="CLU_115305_2_1_4"/>
<dbReference type="UniPathway" id="UPA00028">
    <property type="reaction ID" value="UER00002"/>
</dbReference>
<dbReference type="Proteomes" id="UP000001027">
    <property type="component" value="Chromosome"/>
</dbReference>
<dbReference type="GO" id="GO:0005829">
    <property type="term" value="C:cytosol"/>
    <property type="evidence" value="ECO:0007669"/>
    <property type="project" value="TreeGrafter"/>
</dbReference>
<dbReference type="GO" id="GO:0004068">
    <property type="term" value="F:aspartate 1-decarboxylase activity"/>
    <property type="evidence" value="ECO:0007669"/>
    <property type="project" value="UniProtKB-UniRule"/>
</dbReference>
<dbReference type="GO" id="GO:0006523">
    <property type="term" value="P:alanine biosynthetic process"/>
    <property type="evidence" value="ECO:0007669"/>
    <property type="project" value="InterPro"/>
</dbReference>
<dbReference type="GO" id="GO:0015940">
    <property type="term" value="P:pantothenate biosynthetic process"/>
    <property type="evidence" value="ECO:0007669"/>
    <property type="project" value="UniProtKB-UniRule"/>
</dbReference>
<dbReference type="CDD" id="cd06919">
    <property type="entry name" value="Asp_decarbox"/>
    <property type="match status" value="1"/>
</dbReference>
<dbReference type="Gene3D" id="2.40.40.20">
    <property type="match status" value="1"/>
</dbReference>
<dbReference type="HAMAP" id="MF_00446">
    <property type="entry name" value="PanD"/>
    <property type="match status" value="1"/>
</dbReference>
<dbReference type="InterPro" id="IPR009010">
    <property type="entry name" value="Asp_de-COase-like_dom_sf"/>
</dbReference>
<dbReference type="InterPro" id="IPR003190">
    <property type="entry name" value="Asp_decarbox"/>
</dbReference>
<dbReference type="NCBIfam" id="TIGR00223">
    <property type="entry name" value="panD"/>
    <property type="match status" value="1"/>
</dbReference>
<dbReference type="PANTHER" id="PTHR21012">
    <property type="entry name" value="ASPARTATE 1-DECARBOXYLASE"/>
    <property type="match status" value="1"/>
</dbReference>
<dbReference type="PANTHER" id="PTHR21012:SF0">
    <property type="entry name" value="ASPARTATE 1-DECARBOXYLASE"/>
    <property type="match status" value="1"/>
</dbReference>
<dbReference type="Pfam" id="PF02261">
    <property type="entry name" value="Asp_decarbox"/>
    <property type="match status" value="1"/>
</dbReference>
<dbReference type="PIRSF" id="PIRSF006246">
    <property type="entry name" value="Asp_decarbox"/>
    <property type="match status" value="1"/>
</dbReference>
<dbReference type="SUPFAM" id="SSF50692">
    <property type="entry name" value="ADC-like"/>
    <property type="match status" value="1"/>
</dbReference>
<feature type="chain" id="PRO_0000023041" description="Aspartate 1-decarboxylase beta chain" evidence="1">
    <location>
        <begin position="1"/>
        <end position="24"/>
    </location>
</feature>
<feature type="chain" id="PRO_0000023042" description="Aspartate 1-decarboxylase alpha chain" evidence="1">
    <location>
        <begin position="25"/>
        <end position="122"/>
    </location>
</feature>
<feature type="active site" description="Schiff-base intermediate with substrate; via pyruvic acid" evidence="1">
    <location>
        <position position="25"/>
    </location>
</feature>
<feature type="active site" description="Proton donor" evidence="1">
    <location>
        <position position="58"/>
    </location>
</feature>
<feature type="binding site" evidence="1">
    <location>
        <position position="57"/>
    </location>
    <ligand>
        <name>substrate</name>
    </ligand>
</feature>
<feature type="binding site" evidence="1">
    <location>
        <begin position="73"/>
        <end position="75"/>
    </location>
    <ligand>
        <name>substrate</name>
    </ligand>
</feature>
<feature type="modified residue" description="Pyruvic acid (Ser)" evidence="1">
    <location>
        <position position="25"/>
    </location>
</feature>
<protein>
    <recommendedName>
        <fullName evidence="1">Aspartate 1-decarboxylase</fullName>
        <ecNumber evidence="1">4.1.1.11</ecNumber>
    </recommendedName>
    <alternativeName>
        <fullName evidence="1">Aspartate alpha-decarboxylase</fullName>
    </alternativeName>
    <component>
        <recommendedName>
            <fullName evidence="1">Aspartate 1-decarboxylase beta chain</fullName>
        </recommendedName>
    </component>
    <component>
        <recommendedName>
            <fullName evidence="1">Aspartate 1-decarboxylase alpha chain</fullName>
        </recommendedName>
    </component>
</protein>
<evidence type="ECO:0000255" key="1">
    <source>
        <dbReference type="HAMAP-Rule" id="MF_00446"/>
    </source>
</evidence>
<organism>
    <name type="scientific">Bordetella bronchiseptica (strain ATCC BAA-588 / NCTC 13252 / RB50)</name>
    <name type="common">Alcaligenes bronchisepticus</name>
    <dbReference type="NCBI Taxonomy" id="257310"/>
    <lineage>
        <taxon>Bacteria</taxon>
        <taxon>Pseudomonadati</taxon>
        <taxon>Pseudomonadota</taxon>
        <taxon>Betaproteobacteria</taxon>
        <taxon>Burkholderiales</taxon>
        <taxon>Alcaligenaceae</taxon>
        <taxon>Bordetella</taxon>
    </lineage>
</organism>
<proteinExistence type="inferred from homology"/>
<name>PAND_BORBR</name>
<keyword id="KW-0068">Autocatalytic cleavage</keyword>
<keyword id="KW-0963">Cytoplasm</keyword>
<keyword id="KW-0210">Decarboxylase</keyword>
<keyword id="KW-0456">Lyase</keyword>
<keyword id="KW-0566">Pantothenate biosynthesis</keyword>
<keyword id="KW-0670">Pyruvate</keyword>
<keyword id="KW-0704">Schiff base</keyword>
<keyword id="KW-0865">Zymogen</keyword>
<accession>Q7WHJ6</accession>
<reference key="1">
    <citation type="journal article" date="2003" name="Nat. Genet.">
        <title>Comparative analysis of the genome sequences of Bordetella pertussis, Bordetella parapertussis and Bordetella bronchiseptica.</title>
        <authorList>
            <person name="Parkhill J."/>
            <person name="Sebaihia M."/>
            <person name="Preston A."/>
            <person name="Murphy L.D."/>
            <person name="Thomson N.R."/>
            <person name="Harris D.E."/>
            <person name="Holden M.T.G."/>
            <person name="Churcher C.M."/>
            <person name="Bentley S.D."/>
            <person name="Mungall K.L."/>
            <person name="Cerdeno-Tarraga A.-M."/>
            <person name="Temple L."/>
            <person name="James K.D."/>
            <person name="Harris B."/>
            <person name="Quail M.A."/>
            <person name="Achtman M."/>
            <person name="Atkin R."/>
            <person name="Baker S."/>
            <person name="Basham D."/>
            <person name="Bason N."/>
            <person name="Cherevach I."/>
            <person name="Chillingworth T."/>
            <person name="Collins M."/>
            <person name="Cronin A."/>
            <person name="Davis P."/>
            <person name="Doggett J."/>
            <person name="Feltwell T."/>
            <person name="Goble A."/>
            <person name="Hamlin N."/>
            <person name="Hauser H."/>
            <person name="Holroyd S."/>
            <person name="Jagels K."/>
            <person name="Leather S."/>
            <person name="Moule S."/>
            <person name="Norberczak H."/>
            <person name="O'Neil S."/>
            <person name="Ormond D."/>
            <person name="Price C."/>
            <person name="Rabbinowitsch E."/>
            <person name="Rutter S."/>
            <person name="Sanders M."/>
            <person name="Saunders D."/>
            <person name="Seeger K."/>
            <person name="Sharp S."/>
            <person name="Simmonds M."/>
            <person name="Skelton J."/>
            <person name="Squares R."/>
            <person name="Squares S."/>
            <person name="Stevens K."/>
            <person name="Unwin L."/>
            <person name="Whitehead S."/>
            <person name="Barrell B.G."/>
            <person name="Maskell D.J."/>
        </authorList>
    </citation>
    <scope>NUCLEOTIDE SEQUENCE [LARGE SCALE GENOMIC DNA]</scope>
    <source>
        <strain>ATCC BAA-588 / NCTC 13252 / RB50</strain>
    </source>
</reference>